<organism>
    <name type="scientific">Escherichia coli (strain K12)</name>
    <dbReference type="NCBI Taxonomy" id="83333"/>
    <lineage>
        <taxon>Bacteria</taxon>
        <taxon>Pseudomonadati</taxon>
        <taxon>Pseudomonadota</taxon>
        <taxon>Gammaproteobacteria</taxon>
        <taxon>Enterobacterales</taxon>
        <taxon>Enterobacteriaceae</taxon>
        <taxon>Escherichia</taxon>
    </lineage>
</organism>
<keyword id="KW-1185">Reference proteome</keyword>
<dbReference type="EMBL" id="D16557">
    <property type="protein sequence ID" value="BAA03988.1"/>
    <property type="molecule type" value="Genomic_DNA"/>
</dbReference>
<dbReference type="EMBL" id="U28377">
    <property type="protein sequence ID" value="AAA69201.1"/>
    <property type="molecule type" value="Genomic_DNA"/>
</dbReference>
<dbReference type="EMBL" id="U00096">
    <property type="protein sequence ID" value="AAC76069.1"/>
    <property type="molecule type" value="Genomic_DNA"/>
</dbReference>
<dbReference type="EMBL" id="AP009048">
    <property type="protein sequence ID" value="BAE77089.1"/>
    <property type="molecule type" value="Genomic_DNA"/>
</dbReference>
<dbReference type="PIR" id="G65090">
    <property type="entry name" value="G65090"/>
</dbReference>
<dbReference type="RefSeq" id="NP_417505.1">
    <property type="nucleotide sequence ID" value="NC_000913.3"/>
</dbReference>
<dbReference type="RefSeq" id="WP_000833393.1">
    <property type="nucleotide sequence ID" value="NZ_STEB01000001.1"/>
</dbReference>
<dbReference type="BioGRID" id="4262396">
    <property type="interactions" value="69"/>
</dbReference>
<dbReference type="FunCoup" id="P0ADU7">
    <property type="interactions" value="54"/>
</dbReference>
<dbReference type="IntAct" id="P0ADU7">
    <property type="interactions" value="7"/>
</dbReference>
<dbReference type="STRING" id="511145.b3033"/>
<dbReference type="jPOST" id="P0ADU7"/>
<dbReference type="PaxDb" id="511145-b3033"/>
<dbReference type="EnsemblBacteria" id="AAC76069">
    <property type="protein sequence ID" value="AAC76069"/>
    <property type="gene ID" value="b3033"/>
</dbReference>
<dbReference type="GeneID" id="947518"/>
<dbReference type="KEGG" id="ecj:JW3001"/>
<dbReference type="KEGG" id="eco:b3033"/>
<dbReference type="KEGG" id="ecoc:C3026_16565"/>
<dbReference type="PATRIC" id="fig|1411691.4.peg.3698"/>
<dbReference type="EchoBASE" id="EB2102"/>
<dbReference type="eggNOG" id="COG3151">
    <property type="taxonomic scope" value="Bacteria"/>
</dbReference>
<dbReference type="HOGENOM" id="CLU_116657_1_1_6"/>
<dbReference type="InParanoid" id="P0ADU7"/>
<dbReference type="OMA" id="NAAMHQP"/>
<dbReference type="OrthoDB" id="9793663at2"/>
<dbReference type="PhylomeDB" id="P0ADU7"/>
<dbReference type="BioCyc" id="EcoCyc:G7580-MONOMER"/>
<dbReference type="PRO" id="PR:P0ADU7"/>
<dbReference type="Proteomes" id="UP000000625">
    <property type="component" value="Chromosome"/>
</dbReference>
<dbReference type="InterPro" id="IPR009659">
    <property type="entry name" value="DUF1249"/>
</dbReference>
<dbReference type="NCBIfam" id="NF008267">
    <property type="entry name" value="PRK11039.1"/>
    <property type="match status" value="1"/>
</dbReference>
<dbReference type="PANTHER" id="PTHR38774:SF1">
    <property type="entry name" value="CYTOPLASMIC PROTEIN"/>
    <property type="match status" value="1"/>
</dbReference>
<dbReference type="PANTHER" id="PTHR38774">
    <property type="entry name" value="CYTOPLASMIC PROTEIN-RELATED"/>
    <property type="match status" value="1"/>
</dbReference>
<dbReference type="Pfam" id="PF06853">
    <property type="entry name" value="DUF1249"/>
    <property type="match status" value="1"/>
</dbReference>
<sequence length="140" mass="16548">MKRYTPDFPEMMRLCEMNFSQLRRLLPRNDAPGETVSYQVANAQYRLTIVESTRYTTLVTIEQTAPAISYWSLPSMTVRLYHDAMVAEVCSSQQIFRFKARYDYPNKKLHQRDEKHQINQFLADWLRYCLAHGAMAIPVY</sequence>
<gene>
    <name type="primary">yqiB</name>
    <name type="synonym">yzzH</name>
    <name type="ordered locus">b3033</name>
    <name type="ordered locus">JW3001</name>
</gene>
<protein>
    <recommendedName>
        <fullName>Uncharacterized protein YqiB</fullName>
    </recommendedName>
</protein>
<feature type="chain" id="PRO_0000169413" description="Uncharacterized protein YqiB">
    <location>
        <begin position="1"/>
        <end position="140"/>
    </location>
</feature>
<proteinExistence type="predicted"/>
<reference key="1">
    <citation type="journal article" date="1996" name="J. Biol. Chem.">
        <title>Identification of the cpdA gene encoding cyclic 3',5'-adenosine monophosphate phosphodiesterase in Escherichia coli.</title>
        <authorList>
            <person name="Imamura R."/>
            <person name="Yamanaka K."/>
            <person name="Ogura T."/>
            <person name="Hiraga S."/>
            <person name="Fujita N."/>
            <person name="Ishihama A."/>
            <person name="Niki H."/>
        </authorList>
    </citation>
    <scope>NUCLEOTIDE SEQUENCE [GENOMIC DNA]</scope>
    <source>
        <strain>K12</strain>
    </source>
</reference>
<reference key="2">
    <citation type="journal article" date="1997" name="Science">
        <title>The complete genome sequence of Escherichia coli K-12.</title>
        <authorList>
            <person name="Blattner F.R."/>
            <person name="Plunkett G. III"/>
            <person name="Bloch C.A."/>
            <person name="Perna N.T."/>
            <person name="Burland V."/>
            <person name="Riley M."/>
            <person name="Collado-Vides J."/>
            <person name="Glasner J.D."/>
            <person name="Rode C.K."/>
            <person name="Mayhew G.F."/>
            <person name="Gregor J."/>
            <person name="Davis N.W."/>
            <person name="Kirkpatrick H.A."/>
            <person name="Goeden M.A."/>
            <person name="Rose D.J."/>
            <person name="Mau B."/>
            <person name="Shao Y."/>
        </authorList>
    </citation>
    <scope>NUCLEOTIDE SEQUENCE [LARGE SCALE GENOMIC DNA]</scope>
    <source>
        <strain>K12 / MG1655 / ATCC 47076</strain>
    </source>
</reference>
<reference key="3">
    <citation type="journal article" date="2006" name="Mol. Syst. Biol.">
        <title>Highly accurate genome sequences of Escherichia coli K-12 strains MG1655 and W3110.</title>
        <authorList>
            <person name="Hayashi K."/>
            <person name="Morooka N."/>
            <person name="Yamamoto Y."/>
            <person name="Fujita K."/>
            <person name="Isono K."/>
            <person name="Choi S."/>
            <person name="Ohtsubo E."/>
            <person name="Baba T."/>
            <person name="Wanner B.L."/>
            <person name="Mori H."/>
            <person name="Horiuchi T."/>
        </authorList>
    </citation>
    <scope>NUCLEOTIDE SEQUENCE [LARGE SCALE GENOMIC DNA]</scope>
    <source>
        <strain>K12 / W3110 / ATCC 27325 / DSM 5911</strain>
    </source>
</reference>
<name>YQIB_ECOLI</name>
<accession>P0ADU7</accession>
<accession>P36652</accession>
<accession>Q2M9G7</accession>